<protein>
    <recommendedName>
        <fullName evidence="8">Indian hedgehog protein</fullName>
        <shortName>IHH</shortName>
        <ecNumber evidence="5">3.1.-.-</ecNumber>
    </recommendedName>
    <component>
        <recommendedName>
            <fullName>Indian hedgehog protein N-product</fullName>
        </recommendedName>
    </component>
</protein>
<reference key="1">
    <citation type="journal article" date="1996" name="Science">
        <title>Regulation of rate of cartilage differentiation by Indian hedgehog and PTH-related protein.</title>
        <authorList>
            <person name="Vortkamp A."/>
            <person name="Lee K."/>
            <person name="Lanske B."/>
            <person name="Segre G.V."/>
            <person name="Kronenberg H.M."/>
            <person name="Tabin C.J."/>
        </authorList>
    </citation>
    <scope>NUCLEOTIDE SEQUENCE [MRNA]</scope>
    <scope>TISSUE SPECIFICITY</scope>
    <scope>FUNCTION</scope>
</reference>
<dbReference type="EC" id="3.1.-.-" evidence="5"/>
<dbReference type="EMBL" id="U58511">
    <property type="protein sequence ID" value="AAC60010.1"/>
    <property type="molecule type" value="mRNA"/>
</dbReference>
<dbReference type="RefSeq" id="NP_990288.1">
    <property type="nucleotide sequence ID" value="NM_204957.3"/>
</dbReference>
<dbReference type="SMR" id="Q98938"/>
<dbReference type="FunCoup" id="Q98938">
    <property type="interactions" value="27"/>
</dbReference>
<dbReference type="STRING" id="9031.ENSGALP00000018493"/>
<dbReference type="MEROPS" id="C46.003"/>
<dbReference type="PaxDb" id="9031-ENSGALP00000018493"/>
<dbReference type="Ensembl" id="ENSGALT00010052149.1">
    <property type="protein sequence ID" value="ENSGALP00010031145.1"/>
    <property type="gene ID" value="ENSGALG00010021505.1"/>
</dbReference>
<dbReference type="GeneID" id="395801"/>
<dbReference type="KEGG" id="gga:395801"/>
<dbReference type="CTD" id="3549"/>
<dbReference type="VEuPathDB" id="HostDB:geneid_395801"/>
<dbReference type="eggNOG" id="KOG3638">
    <property type="taxonomic scope" value="Eukaryota"/>
</dbReference>
<dbReference type="GeneTree" id="ENSGT00940000159207"/>
<dbReference type="InParanoid" id="Q98938"/>
<dbReference type="OMA" id="APAVRGC"/>
<dbReference type="OrthoDB" id="5212at2759"/>
<dbReference type="PhylomeDB" id="Q98938"/>
<dbReference type="Reactome" id="R-GGA-5358346">
    <property type="pathway name" value="Hedgehog ligand biogenesis"/>
</dbReference>
<dbReference type="Reactome" id="R-GGA-5362798">
    <property type="pathway name" value="Release of Hh-Np from the secreting cell"/>
</dbReference>
<dbReference type="Reactome" id="R-GGA-5632681">
    <property type="pathway name" value="Ligand-receptor interactions"/>
</dbReference>
<dbReference type="PRO" id="PR:Q98938"/>
<dbReference type="Proteomes" id="UP000000539">
    <property type="component" value="Chromosome 7"/>
</dbReference>
<dbReference type="Bgee" id="ENSGALG00000011347">
    <property type="expression patterns" value="Expressed in liver and 3 other cell types or tissues"/>
</dbReference>
<dbReference type="GO" id="GO:0005789">
    <property type="term" value="C:endoplasmic reticulum membrane"/>
    <property type="evidence" value="ECO:0007669"/>
    <property type="project" value="UniProtKB-SubCell"/>
</dbReference>
<dbReference type="GO" id="GO:0031012">
    <property type="term" value="C:extracellular matrix"/>
    <property type="evidence" value="ECO:0007669"/>
    <property type="project" value="Ensembl"/>
</dbReference>
<dbReference type="GO" id="GO:0005615">
    <property type="term" value="C:extracellular space"/>
    <property type="evidence" value="ECO:0000314"/>
    <property type="project" value="AgBase"/>
</dbReference>
<dbReference type="GO" id="GO:0000139">
    <property type="term" value="C:Golgi membrane"/>
    <property type="evidence" value="ECO:0007669"/>
    <property type="project" value="UniProtKB-SubCell"/>
</dbReference>
<dbReference type="GO" id="GO:0005886">
    <property type="term" value="C:plasma membrane"/>
    <property type="evidence" value="ECO:0007669"/>
    <property type="project" value="UniProtKB-SubCell"/>
</dbReference>
<dbReference type="GO" id="GO:0005509">
    <property type="term" value="F:calcium ion binding"/>
    <property type="evidence" value="ECO:0000318"/>
    <property type="project" value="GO_Central"/>
</dbReference>
<dbReference type="GO" id="GO:0140853">
    <property type="term" value="F:cholesterol-protein transferase activity"/>
    <property type="evidence" value="ECO:0000250"/>
    <property type="project" value="UniProtKB"/>
</dbReference>
<dbReference type="GO" id="GO:0005113">
    <property type="term" value="F:patched binding"/>
    <property type="evidence" value="ECO:0000250"/>
    <property type="project" value="UniProtKB"/>
</dbReference>
<dbReference type="GO" id="GO:0008233">
    <property type="term" value="F:peptidase activity"/>
    <property type="evidence" value="ECO:0000250"/>
    <property type="project" value="UniProtKB"/>
</dbReference>
<dbReference type="GO" id="GO:0034189">
    <property type="term" value="F:very-low-density lipoprotein particle binding"/>
    <property type="evidence" value="ECO:0000250"/>
    <property type="project" value="UniProtKB"/>
</dbReference>
<dbReference type="GO" id="GO:0045453">
    <property type="term" value="P:bone resorption"/>
    <property type="evidence" value="ECO:0007669"/>
    <property type="project" value="Ensembl"/>
</dbReference>
<dbReference type="GO" id="GO:0001569">
    <property type="term" value="P:branching involved in blood vessel morphogenesis"/>
    <property type="evidence" value="ECO:0007669"/>
    <property type="project" value="Ensembl"/>
</dbReference>
<dbReference type="GO" id="GO:0060220">
    <property type="term" value="P:camera-type eye photoreceptor cell fate commitment"/>
    <property type="evidence" value="ECO:0007669"/>
    <property type="project" value="Ensembl"/>
</dbReference>
<dbReference type="GO" id="GO:0051216">
    <property type="term" value="P:cartilage development"/>
    <property type="evidence" value="ECO:0000270"/>
    <property type="project" value="UniProtKB"/>
</dbReference>
<dbReference type="GO" id="GO:0001708">
    <property type="term" value="P:cell fate specification"/>
    <property type="evidence" value="ECO:0000318"/>
    <property type="project" value="GO_Central"/>
</dbReference>
<dbReference type="GO" id="GO:0048469">
    <property type="term" value="P:cell maturation"/>
    <property type="evidence" value="ECO:0007669"/>
    <property type="project" value="Ensembl"/>
</dbReference>
<dbReference type="GO" id="GO:0007267">
    <property type="term" value="P:cell-cell signaling"/>
    <property type="evidence" value="ECO:0007669"/>
    <property type="project" value="InterPro"/>
</dbReference>
<dbReference type="GO" id="GO:0060591">
    <property type="term" value="P:chondroblast differentiation"/>
    <property type="evidence" value="ECO:0000315"/>
    <property type="project" value="AgBase"/>
</dbReference>
<dbReference type="GO" id="GO:0003413">
    <property type="term" value="P:chondrocyte differentiation involved in endochondral bone morphogenesis"/>
    <property type="evidence" value="ECO:0007669"/>
    <property type="project" value="Ensembl"/>
</dbReference>
<dbReference type="GO" id="GO:0035988">
    <property type="term" value="P:chondrocyte proliferation"/>
    <property type="evidence" value="ECO:0007669"/>
    <property type="project" value="Ensembl"/>
</dbReference>
<dbReference type="GO" id="GO:0048596">
    <property type="term" value="P:embryonic camera-type eye morphogenesis"/>
    <property type="evidence" value="ECO:0007669"/>
    <property type="project" value="Ensembl"/>
</dbReference>
<dbReference type="GO" id="GO:0048557">
    <property type="term" value="P:embryonic digestive tract morphogenesis"/>
    <property type="evidence" value="ECO:0007669"/>
    <property type="project" value="Ensembl"/>
</dbReference>
<dbReference type="GO" id="GO:0042733">
    <property type="term" value="P:embryonic digit morphogenesis"/>
    <property type="evidence" value="ECO:0007669"/>
    <property type="project" value="Ensembl"/>
</dbReference>
<dbReference type="GO" id="GO:0009880">
    <property type="term" value="P:embryonic pattern specification"/>
    <property type="evidence" value="ECO:0007669"/>
    <property type="project" value="Ensembl"/>
</dbReference>
<dbReference type="GO" id="GO:0072498">
    <property type="term" value="P:embryonic skeletal joint development"/>
    <property type="evidence" value="ECO:0007669"/>
    <property type="project" value="Ensembl"/>
</dbReference>
<dbReference type="GO" id="GO:0003382">
    <property type="term" value="P:epithelial cell morphogenesis"/>
    <property type="evidence" value="ECO:0007669"/>
    <property type="project" value="Ensembl"/>
</dbReference>
<dbReference type="GO" id="GO:0090136">
    <property type="term" value="P:epithelial cell-cell adhesion"/>
    <property type="evidence" value="ECO:0007669"/>
    <property type="project" value="Ensembl"/>
</dbReference>
<dbReference type="GO" id="GO:0060323">
    <property type="term" value="P:head morphogenesis"/>
    <property type="evidence" value="ECO:0007669"/>
    <property type="project" value="Ensembl"/>
</dbReference>
<dbReference type="GO" id="GO:0001947">
    <property type="term" value="P:heart looping"/>
    <property type="evidence" value="ECO:0007669"/>
    <property type="project" value="Ensembl"/>
</dbReference>
<dbReference type="GO" id="GO:0035264">
    <property type="term" value="P:multicellular organism growth"/>
    <property type="evidence" value="ECO:0007669"/>
    <property type="project" value="Ensembl"/>
</dbReference>
<dbReference type="GO" id="GO:0046639">
    <property type="term" value="P:negative regulation of alpha-beta T cell differentiation"/>
    <property type="evidence" value="ECO:0007669"/>
    <property type="project" value="Ensembl"/>
</dbReference>
<dbReference type="GO" id="GO:0032331">
    <property type="term" value="P:negative regulation of chondrocyte differentiation"/>
    <property type="evidence" value="ECO:0000315"/>
    <property type="project" value="AgBase"/>
</dbReference>
<dbReference type="GO" id="GO:1903042">
    <property type="term" value="P:negative regulation of chondrocyte hypertrophy"/>
    <property type="evidence" value="ECO:0000315"/>
    <property type="project" value="AgBase"/>
</dbReference>
<dbReference type="GO" id="GO:0048074">
    <property type="term" value="P:negative regulation of eye pigmentation"/>
    <property type="evidence" value="ECO:0007669"/>
    <property type="project" value="Ensembl"/>
</dbReference>
<dbReference type="GO" id="GO:0033088">
    <property type="term" value="P:negative regulation of immature T cell proliferation in thymus"/>
    <property type="evidence" value="ECO:0007669"/>
    <property type="project" value="Ensembl"/>
</dbReference>
<dbReference type="GO" id="GO:0048666">
    <property type="term" value="P:neuron development"/>
    <property type="evidence" value="ECO:0007669"/>
    <property type="project" value="Ensembl"/>
</dbReference>
<dbReference type="GO" id="GO:0001649">
    <property type="term" value="P:osteoblast differentiation"/>
    <property type="evidence" value="ECO:0007669"/>
    <property type="project" value="Ensembl"/>
</dbReference>
<dbReference type="GO" id="GO:0031016">
    <property type="term" value="P:pancreas development"/>
    <property type="evidence" value="ECO:0007669"/>
    <property type="project" value="Ensembl"/>
</dbReference>
<dbReference type="GO" id="GO:0010694">
    <property type="term" value="P:positive regulation of alkaline phosphatase activity"/>
    <property type="evidence" value="ECO:0000314"/>
    <property type="project" value="AgBase"/>
</dbReference>
<dbReference type="GO" id="GO:0046638">
    <property type="term" value="P:positive regulation of alpha-beta T cell differentiation"/>
    <property type="evidence" value="ECO:0007669"/>
    <property type="project" value="Ensembl"/>
</dbReference>
<dbReference type="GO" id="GO:0032967">
    <property type="term" value="P:positive regulation of collagen biosynthetic process"/>
    <property type="evidence" value="ECO:0007669"/>
    <property type="project" value="Ensembl"/>
</dbReference>
<dbReference type="GO" id="GO:0010628">
    <property type="term" value="P:positive regulation of gene expression"/>
    <property type="evidence" value="ECO:0000315"/>
    <property type="project" value="AgBase"/>
</dbReference>
<dbReference type="GO" id="GO:0002053">
    <property type="term" value="P:positive regulation of mesenchymal cell proliferation"/>
    <property type="evidence" value="ECO:0007669"/>
    <property type="project" value="Ensembl"/>
</dbReference>
<dbReference type="GO" id="GO:0045669">
    <property type="term" value="P:positive regulation of osteoblast differentiation"/>
    <property type="evidence" value="ECO:0000314"/>
    <property type="project" value="AgBase"/>
</dbReference>
<dbReference type="GO" id="GO:1902730">
    <property type="term" value="P:positive regulation of proteoglycan biosynthetic process"/>
    <property type="evidence" value="ECO:0000315"/>
    <property type="project" value="AgBase"/>
</dbReference>
<dbReference type="GO" id="GO:0045880">
    <property type="term" value="P:positive regulation of smoothened signaling pathway"/>
    <property type="evidence" value="ECO:0000250"/>
    <property type="project" value="UniProtKB"/>
</dbReference>
<dbReference type="GO" id="GO:0033089">
    <property type="term" value="P:positive regulation of T cell differentiation in thymus"/>
    <property type="evidence" value="ECO:0007669"/>
    <property type="project" value="Ensembl"/>
</dbReference>
<dbReference type="GO" id="GO:0045944">
    <property type="term" value="P:positive regulation of transcription by RNA polymerase II"/>
    <property type="evidence" value="ECO:0007669"/>
    <property type="project" value="Ensembl"/>
</dbReference>
<dbReference type="GO" id="GO:0016540">
    <property type="term" value="P:protein autoprocessing"/>
    <property type="evidence" value="ECO:0007669"/>
    <property type="project" value="InterPro"/>
</dbReference>
<dbReference type="GO" id="GO:0006029">
    <property type="term" value="P:proteoglycan metabolic process"/>
    <property type="evidence" value="ECO:0007669"/>
    <property type="project" value="Ensembl"/>
</dbReference>
<dbReference type="GO" id="GO:1902738">
    <property type="term" value="P:regulation of chondrocyte differentiation involved in endochondral bone morphogenesis"/>
    <property type="evidence" value="ECO:0000315"/>
    <property type="project" value="AgBase"/>
</dbReference>
<dbReference type="GO" id="GO:0010468">
    <property type="term" value="P:regulation of gene expression"/>
    <property type="evidence" value="ECO:0000318"/>
    <property type="project" value="GO_Central"/>
</dbReference>
<dbReference type="GO" id="GO:1902733">
    <property type="term" value="P:regulation of growth plate cartilage chondrocyte differentiation"/>
    <property type="evidence" value="ECO:0000315"/>
    <property type="project" value="AgBase"/>
</dbReference>
<dbReference type="GO" id="GO:0003420">
    <property type="term" value="P:regulation of growth plate cartilage chondrocyte proliferation"/>
    <property type="evidence" value="ECO:0000315"/>
    <property type="project" value="AgBase"/>
</dbReference>
<dbReference type="GO" id="GO:0003406">
    <property type="term" value="P:retinal pigment epithelium development"/>
    <property type="evidence" value="ECO:0007669"/>
    <property type="project" value="Ensembl"/>
</dbReference>
<dbReference type="GO" id="GO:0097264">
    <property type="term" value="P:self proteolysis"/>
    <property type="evidence" value="ECO:0000250"/>
    <property type="project" value="UniProtKB"/>
</dbReference>
<dbReference type="GO" id="GO:0048745">
    <property type="term" value="P:smooth muscle tissue development"/>
    <property type="evidence" value="ECO:0007669"/>
    <property type="project" value="Ensembl"/>
</dbReference>
<dbReference type="GO" id="GO:0007224">
    <property type="term" value="P:smoothened signaling pathway"/>
    <property type="evidence" value="ECO:0000315"/>
    <property type="project" value="AgBase"/>
</dbReference>
<dbReference type="GO" id="GO:0061053">
    <property type="term" value="P:somite development"/>
    <property type="evidence" value="ECO:0007669"/>
    <property type="project" value="Ensembl"/>
</dbReference>
<dbReference type="GO" id="GO:0030704">
    <property type="term" value="P:vitelline membrane formation"/>
    <property type="evidence" value="ECO:0007669"/>
    <property type="project" value="Ensembl"/>
</dbReference>
<dbReference type="CDD" id="cd00081">
    <property type="entry name" value="Hint"/>
    <property type="match status" value="1"/>
</dbReference>
<dbReference type="FunFam" id="2.170.16.10:FF:000001">
    <property type="entry name" value="Indian hedgehog"/>
    <property type="match status" value="1"/>
</dbReference>
<dbReference type="FunFam" id="3.30.1380.10:FF:000001">
    <property type="entry name" value="Indian hedgehog"/>
    <property type="match status" value="1"/>
</dbReference>
<dbReference type="Gene3D" id="3.30.1380.10">
    <property type="match status" value="1"/>
</dbReference>
<dbReference type="Gene3D" id="2.170.16.10">
    <property type="entry name" value="Hedgehog/Intein (Hint) domain"/>
    <property type="match status" value="1"/>
</dbReference>
<dbReference type="InterPro" id="IPR001657">
    <property type="entry name" value="Hedgehog"/>
</dbReference>
<dbReference type="InterPro" id="IPR001767">
    <property type="entry name" value="Hedgehog_Hint"/>
</dbReference>
<dbReference type="InterPro" id="IPR009045">
    <property type="entry name" value="Hedgehog_sig/DD-Pept_Zn-bd_sf"/>
</dbReference>
<dbReference type="InterPro" id="IPR050387">
    <property type="entry name" value="Hedgehog_Signaling"/>
</dbReference>
<dbReference type="InterPro" id="IPR000320">
    <property type="entry name" value="Hedgehog_signalling_dom"/>
</dbReference>
<dbReference type="InterPro" id="IPR003586">
    <property type="entry name" value="Hint_dom_C"/>
</dbReference>
<dbReference type="InterPro" id="IPR003587">
    <property type="entry name" value="Hint_dom_N"/>
</dbReference>
<dbReference type="InterPro" id="IPR036844">
    <property type="entry name" value="Hint_dom_sf"/>
</dbReference>
<dbReference type="PANTHER" id="PTHR11889">
    <property type="entry name" value="HEDGEHOG"/>
    <property type="match status" value="1"/>
</dbReference>
<dbReference type="PANTHER" id="PTHR11889:SF39">
    <property type="entry name" value="INDIAN HEDGEHOG PROTEIN"/>
    <property type="match status" value="1"/>
</dbReference>
<dbReference type="Pfam" id="PF01085">
    <property type="entry name" value="HH_signal"/>
    <property type="match status" value="1"/>
</dbReference>
<dbReference type="Pfam" id="PF01079">
    <property type="entry name" value="Hint"/>
    <property type="match status" value="1"/>
</dbReference>
<dbReference type="PIRSF" id="PIRSF009400">
    <property type="entry name" value="Peptidase_C46"/>
    <property type="match status" value="1"/>
</dbReference>
<dbReference type="PRINTS" id="PR00632">
    <property type="entry name" value="SONICHHOG"/>
</dbReference>
<dbReference type="SMART" id="SM00305">
    <property type="entry name" value="HintC"/>
    <property type="match status" value="1"/>
</dbReference>
<dbReference type="SMART" id="SM00306">
    <property type="entry name" value="HintN"/>
    <property type="match status" value="1"/>
</dbReference>
<dbReference type="SUPFAM" id="SSF55166">
    <property type="entry name" value="Hedgehog/DD-peptidase"/>
    <property type="match status" value="1"/>
</dbReference>
<dbReference type="SUPFAM" id="SSF51294">
    <property type="entry name" value="Hedgehog/intein (Hint) domain"/>
    <property type="match status" value="1"/>
</dbReference>
<proteinExistence type="evidence at transcript level"/>
<comment type="function">
    <text evidence="1">Plays a role in embryonic morphogenesis; it is involved in the regulation of endochondral skeleton formation, and the development of retinal pigment epithelium (RPE), photoreceptors and periocular tissues (By similarity).</text>
</comment>
<comment type="function">
    <molecule>Indian hedgehog protein</molecule>
    <text evidence="5">The C-terminal part of the indian hedgehog protein precursor displays an autoproteolysis and a cholesterol transferase activity (By similarity). Both activities result in the cleavage of the full-length protein into two parts followed by the covalent attachment of a cholesterol moiety to the C-terminal of the newly generated N-product (By similarity). Both activities occur in the endoplasmic reticulum (By similarity).</text>
</comment>
<comment type="function">
    <molecule>Indian hedgehog protein N-product</molecule>
    <text evidence="4 5 7">The dually lipidated indian hedgehog protein N-product is a morphogen which is essential for a variety of patterning events during development. Binds to the patched (PTCH1) receptor, which functions in association with smoothened (SMO), to activate the transcription of target genes (By similarity). Plays a role in morphogenesis of the skeleton by coordinating growth and differentiation of the endochondral skeleton. Positively regulates PTHLH expression during endochondral bone formation preventing chondrocyte hypertrophy. In contrast, participates in normal chondrocyte proliferation in a PTHLH-independent pathway (PubMed:8662546).</text>
</comment>
<comment type="catalytic activity">
    <molecule>Indian hedgehog protein</molecule>
    <reaction evidence="5">
        <text>glycyl-L-cysteinyl-[protein] + cholesterol + H(+) = [protein]-C-terminal glycyl cholesterol ester + N-terminal L-cysteinyl-[protein]</text>
        <dbReference type="Rhea" id="RHEA:59504"/>
        <dbReference type="Rhea" id="RHEA-COMP:12707"/>
        <dbReference type="Rhea" id="RHEA-COMP:15369"/>
        <dbReference type="Rhea" id="RHEA-COMP:15374"/>
        <dbReference type="ChEBI" id="CHEBI:15378"/>
        <dbReference type="ChEBI" id="CHEBI:16113"/>
        <dbReference type="ChEBI" id="CHEBI:65250"/>
        <dbReference type="ChEBI" id="CHEBI:143135"/>
        <dbReference type="ChEBI" id="CHEBI:143140"/>
    </reaction>
    <physiologicalReaction direction="left-to-right" evidence="5">
        <dbReference type="Rhea" id="RHEA:59505"/>
    </physiologicalReaction>
</comment>
<comment type="subunit">
    <molecule>Indian hedgehog protein N-product</molecule>
    <text evidence="3">Multimer.</text>
</comment>
<comment type="subunit">
    <text evidence="1 3">Interacts with BOC and CDON. Interacts with PTCH1 (By similarity). Interacts with glypican GPC3 (By similarity).</text>
</comment>
<comment type="subcellular location">
    <molecule>Indian hedgehog protein N-product</molecule>
    <subcellularLocation>
        <location evidence="3">Cell membrane</location>
        <topology evidence="5">Lipid-anchor</topology>
    </subcellularLocation>
    <text evidence="4">The N-product remains associated with the cell surface.</text>
</comment>
<comment type="subcellular location">
    <molecule>Indian hedgehog protein</molecule>
    <subcellularLocation>
        <location evidence="4">Endoplasmic reticulum membrane</location>
    </subcellularLocation>
    <subcellularLocation>
        <location evidence="4">Golgi apparatus membrane</location>
    </subcellularLocation>
    <subcellularLocation>
        <location evidence="3">Secreted</location>
    </subcellularLocation>
    <text evidence="4">Co-localizes with HHAT in the ER and Golgi membrane.</text>
</comment>
<comment type="tissue specificity">
    <text evidence="7">Expressed in developing midgut, lung and cartilage of developing long bones in the limb.</text>
</comment>
<comment type="domain">
    <molecule>Indian hedgehog protein N-product</molecule>
    <text evidence="3">Binds calcium and zinc ions; this stabilizes the protein fold and is essential for protein-protein interactions mediated by this domain.</text>
</comment>
<comment type="PTM">
    <molecule>Indian hedgehog protein N-product</molecule>
    <text evidence="3">Cholesterylation is required for N-product targeting to lipid rafts and multimerization.</text>
</comment>
<comment type="PTM">
    <molecule>Indian hedgehog protein</molecule>
    <text evidence="4 5">The C-terminal domain displays an autoproteolysis activity and a cholesterol transferase activity (By similarity). Both activities result in the cleavage of the full-length protein and covalent attachment of a cholesterol moiety to the C-terminal of the newly generated N-product (By similarity). The N-product is the active species in both local and long-range signaling, whereas the C-product is degraded in the endoplasmic reticulum (By similarity).</text>
</comment>
<comment type="PTM">
    <molecule>Indian hedgehog protein N-product</molecule>
    <text evidence="3">N-palmitoylation by HHAT of N-product is required for indian hedgehog protein N-product multimerization and full activity.</text>
</comment>
<comment type="similarity">
    <text evidence="8">Belongs to the hedgehog family.</text>
</comment>
<evidence type="ECO:0000250" key="1">
    <source>
        <dbReference type="UniProtKB" id="P97812"/>
    </source>
</evidence>
<evidence type="ECO:0000250" key="2">
    <source>
        <dbReference type="UniProtKB" id="Q02936"/>
    </source>
</evidence>
<evidence type="ECO:0000250" key="3">
    <source>
        <dbReference type="UniProtKB" id="Q14623"/>
    </source>
</evidence>
<evidence type="ECO:0000250" key="4">
    <source>
        <dbReference type="UniProtKB" id="Q15465"/>
    </source>
</evidence>
<evidence type="ECO:0000250" key="5">
    <source>
        <dbReference type="UniProtKB" id="Q62226"/>
    </source>
</evidence>
<evidence type="ECO:0000255" key="6"/>
<evidence type="ECO:0000269" key="7">
    <source>
    </source>
</evidence>
<evidence type="ECO:0000305" key="8"/>
<organism>
    <name type="scientific">Gallus gallus</name>
    <name type="common">Chicken</name>
    <dbReference type="NCBI Taxonomy" id="9031"/>
    <lineage>
        <taxon>Eukaryota</taxon>
        <taxon>Metazoa</taxon>
        <taxon>Chordata</taxon>
        <taxon>Craniata</taxon>
        <taxon>Vertebrata</taxon>
        <taxon>Euteleostomi</taxon>
        <taxon>Archelosauria</taxon>
        <taxon>Archosauria</taxon>
        <taxon>Dinosauria</taxon>
        <taxon>Saurischia</taxon>
        <taxon>Theropoda</taxon>
        <taxon>Coelurosauria</taxon>
        <taxon>Aves</taxon>
        <taxon>Neognathae</taxon>
        <taxon>Galloanserae</taxon>
        <taxon>Galliformes</taxon>
        <taxon>Phasianidae</taxon>
        <taxon>Phasianinae</taxon>
        <taxon>Gallus</taxon>
    </lineage>
</organism>
<gene>
    <name evidence="3" type="primary">IHH</name>
</gene>
<keyword id="KW-0068">Autocatalytic cleavage</keyword>
<keyword id="KW-0106">Calcium</keyword>
<keyword id="KW-1003">Cell membrane</keyword>
<keyword id="KW-0217">Developmental protein</keyword>
<keyword id="KW-0256">Endoplasmic reticulum</keyword>
<keyword id="KW-0333">Golgi apparatus</keyword>
<keyword id="KW-0378">Hydrolase</keyword>
<keyword id="KW-0449">Lipoprotein</keyword>
<keyword id="KW-0472">Membrane</keyword>
<keyword id="KW-0479">Metal-binding</keyword>
<keyword id="KW-0564">Palmitate</keyword>
<keyword id="KW-0645">Protease</keyword>
<keyword id="KW-1185">Reference proteome</keyword>
<keyword id="KW-0964">Secreted</keyword>
<keyword id="KW-0732">Signal</keyword>
<keyword id="KW-0808">Transferase</keyword>
<keyword id="KW-0862">Zinc</keyword>
<feature type="signal peptide" evidence="6">
    <location>
        <begin position="1"/>
        <end position="23"/>
    </location>
</feature>
<feature type="chain" id="PRO_0000013235" description="Indian hedgehog protein">
    <location>
        <begin position="24"/>
        <end position="408"/>
    </location>
</feature>
<feature type="chain" id="PRO_0000013236" description="Indian hedgehog protein N-product">
    <location>
        <begin position="24"/>
        <end position="198"/>
    </location>
</feature>
<feature type="binding site" evidence="3">
    <location>
        <position position="90"/>
    </location>
    <ligand>
        <name>Ca(2+)</name>
        <dbReference type="ChEBI" id="CHEBI:29108"/>
        <label>1</label>
    </ligand>
</feature>
<feature type="binding site" evidence="3">
    <location>
        <position position="91"/>
    </location>
    <ligand>
        <name>Ca(2+)</name>
        <dbReference type="ChEBI" id="CHEBI:29108"/>
        <label>1</label>
    </ligand>
</feature>
<feature type="binding site" evidence="3">
    <location>
        <position position="91"/>
    </location>
    <ligand>
        <name>Ca(2+)</name>
        <dbReference type="ChEBI" id="CHEBI:29108"/>
        <label>2</label>
    </ligand>
</feature>
<feature type="binding site" evidence="3">
    <location>
        <position position="96"/>
    </location>
    <ligand>
        <name>Ca(2+)</name>
        <dbReference type="ChEBI" id="CHEBI:29108"/>
        <label>1</label>
    </ligand>
</feature>
<feature type="binding site" evidence="3">
    <location>
        <position position="126"/>
    </location>
    <ligand>
        <name>Ca(2+)</name>
        <dbReference type="ChEBI" id="CHEBI:29108"/>
        <label>1</label>
    </ligand>
</feature>
<feature type="binding site" evidence="3">
    <location>
        <position position="127"/>
    </location>
    <ligand>
        <name>Ca(2+)</name>
        <dbReference type="ChEBI" id="CHEBI:29108"/>
        <label>1</label>
    </ligand>
</feature>
<feature type="binding site" evidence="3">
    <location>
        <position position="127"/>
    </location>
    <ligand>
        <name>Ca(2+)</name>
        <dbReference type="ChEBI" id="CHEBI:29108"/>
        <label>2</label>
    </ligand>
</feature>
<feature type="binding site" evidence="3">
    <location>
        <position position="130"/>
    </location>
    <ligand>
        <name>Ca(2+)</name>
        <dbReference type="ChEBI" id="CHEBI:29108"/>
        <label>2</label>
    </ligand>
</feature>
<feature type="binding site" evidence="3">
    <location>
        <position position="132"/>
    </location>
    <ligand>
        <name>Ca(2+)</name>
        <dbReference type="ChEBI" id="CHEBI:29108"/>
        <label>2</label>
    </ligand>
</feature>
<feature type="binding site" evidence="3">
    <location>
        <position position="141"/>
    </location>
    <ligand>
        <name>Zn(2+)</name>
        <dbReference type="ChEBI" id="CHEBI:29105"/>
    </ligand>
</feature>
<feature type="binding site" evidence="3">
    <location>
        <position position="148"/>
    </location>
    <ligand>
        <name>Zn(2+)</name>
        <dbReference type="ChEBI" id="CHEBI:29105"/>
    </ligand>
</feature>
<feature type="binding site" evidence="3">
    <location>
        <position position="183"/>
    </location>
    <ligand>
        <name>Zn(2+)</name>
        <dbReference type="ChEBI" id="CHEBI:29105"/>
    </ligand>
</feature>
<feature type="site" description="Cleavage; by autolysis" evidence="2">
    <location>
        <begin position="198"/>
        <end position="199"/>
    </location>
</feature>
<feature type="site" description="Involved in cholesterol transfer" evidence="2">
    <location>
        <position position="244"/>
    </location>
</feature>
<feature type="site" description="Involved in auto-cleavage" evidence="2">
    <location>
        <position position="268"/>
    </location>
</feature>
<feature type="site" description="Essential for auto-cleavage" evidence="2">
    <location>
        <position position="271"/>
    </location>
</feature>
<feature type="lipid moiety-binding region" description="N-palmitoyl cysteine" evidence="3">
    <location>
        <position position="24"/>
    </location>
</feature>
<feature type="lipid moiety-binding region" description="Cholesterol glycine ester" evidence="2">
    <location>
        <position position="198"/>
    </location>
</feature>
<accession>Q98938</accession>
<name>IHH_CHICK</name>
<sequence>MKPARLLLLLSGCALLLAPAVRCCGPGRVVGSRRRPPRKLIPLAYKQFSPNVPEKTLGASGRYEGKIARNSERFKELTPNYNPDIIFKDEENTGADRLMTQRCKDRLNSLAISVMNQWPGVKLRVTEGWDEDGHHSEESLHYEGRAVDITTSDRDRNKYGMLARLAVEAGFDWVYYESKAHIHCSVKSEHSAAAKTGGCFPGRALATLENGARTPLWALRPGQRVLAMDGAGRPTYSDFLAFLDKEPRALTAFHVIETRQPPRRLALTPTHLLFVADNASAPAAQFRPTFASHVQPGHFVLVAVGSGGLQPAEVVGVRGRTDVGAYAPLTRHGTLVVDDVVASCFALVREQQLAQMAFWPLRLYHSLLGGPGVQGDGVHWYSGLLYRLGRMLLPPDSFHPLGAPRAES</sequence>